<comment type="cofactor">
    <cofactor evidence="1">
        <name>FAD</name>
        <dbReference type="ChEBI" id="CHEBI:57692"/>
    </cofactor>
</comment>
<comment type="similarity">
    <text evidence="1">Belongs to the flavin monoamine oxidase family.</text>
</comment>
<comment type="sequence caution" evidence="1">
    <conflict type="erroneous initiation">
        <sequence resource="EMBL-CDS" id="CCP45981"/>
    </conflict>
    <text>Truncated N-terminus.</text>
</comment>
<evidence type="ECO:0000305" key="1"/>
<proteinExistence type="evidence at protein level"/>
<protein>
    <recommendedName>
        <fullName>Putative flavin-containing monoamine oxidase AofH</fullName>
        <ecNumber>1.4.3.-</ecNumber>
    </recommendedName>
</protein>
<organism>
    <name type="scientific">Mycobacterium tuberculosis (strain ATCC 25618 / H37Rv)</name>
    <dbReference type="NCBI Taxonomy" id="83332"/>
    <lineage>
        <taxon>Bacteria</taxon>
        <taxon>Bacillati</taxon>
        <taxon>Actinomycetota</taxon>
        <taxon>Actinomycetes</taxon>
        <taxon>Mycobacteriales</taxon>
        <taxon>Mycobacteriaceae</taxon>
        <taxon>Mycobacterium</taxon>
        <taxon>Mycobacterium tuberculosis complex</taxon>
    </lineage>
</organism>
<sequence>MRLTRAVTNPPWTVDVVVVGAGFAGLAAARELTRQGHEVLVFEGRDRVGGRSLTGRVAGVPADMGGSFIGPTQDAVLALATELGIPTTPTHRDGRNVIQWRGSARSYRGTIPKLSLTGLIDIGRLRWQFERIARGVPVAAPWDARRARELDDVSLGEWLRLVRATSSSRNLMAIMTRVTWGCEPDDVSMLHAARYVRAAGGLDRLLDVKNGAQQDRVPGGTQQIAQAAAAQLGARVLLNAAVRRIDRHGAGVTVTSDQGQAEAGFVIVAIPPAHRVAIEFDPPLPPEYQQLAHHWPQGRLSKAYAAYSTPFWRASGYSGQALSDEAPVFITFDVSPHADGPGILMGFVDARGFDSLPIEERRRDALRCFASLFGDEALDPLDYVDYRWGTEEFAPGGPTAAVPPGSWTKYGHWLREPVGPIHWASTETADEWTGYFDGAVRSGQRAAAEVAALL</sequence>
<accession>P9WQ15</accession>
<accession>L0TDC6</accession>
<accession>O53320</accession>
<accession>P63533</accession>
<name>AOFH_MYCTU</name>
<keyword id="KW-0274">FAD</keyword>
<keyword id="KW-0285">Flavoprotein</keyword>
<keyword id="KW-0560">Oxidoreductase</keyword>
<keyword id="KW-1185">Reference proteome</keyword>
<gene>
    <name type="primary">aofH</name>
    <name type="ordered locus">Rv3170</name>
    <name type="ORF">MTV014.14</name>
</gene>
<dbReference type="EC" id="1.4.3.-"/>
<dbReference type="EMBL" id="AL123456">
    <property type="protein sequence ID" value="CCP45981.1"/>
    <property type="status" value="ALT_INIT"/>
    <property type="molecule type" value="Genomic_DNA"/>
</dbReference>
<dbReference type="PIR" id="H70947">
    <property type="entry name" value="H70947"/>
</dbReference>
<dbReference type="RefSeq" id="NP_217686.1">
    <property type="nucleotide sequence ID" value="NC_000962.3"/>
</dbReference>
<dbReference type="SMR" id="P9WQ15"/>
<dbReference type="FunCoup" id="P9WQ15">
    <property type="interactions" value="189"/>
</dbReference>
<dbReference type="STRING" id="83332.Rv3170"/>
<dbReference type="PaxDb" id="83332-Rv3170"/>
<dbReference type="DNASU" id="888754"/>
<dbReference type="GeneID" id="888754"/>
<dbReference type="KEGG" id="mtu:Rv3170"/>
<dbReference type="TubercuList" id="Rv3170"/>
<dbReference type="eggNOG" id="COG1231">
    <property type="taxonomic scope" value="Bacteria"/>
</dbReference>
<dbReference type="InParanoid" id="P9WQ15"/>
<dbReference type="OrthoDB" id="337830at2"/>
<dbReference type="Proteomes" id="UP000001584">
    <property type="component" value="Chromosome"/>
</dbReference>
<dbReference type="GO" id="GO:0005829">
    <property type="term" value="C:cytosol"/>
    <property type="evidence" value="ECO:0007005"/>
    <property type="project" value="MTBBASE"/>
</dbReference>
<dbReference type="GO" id="GO:0005886">
    <property type="term" value="C:plasma membrane"/>
    <property type="evidence" value="ECO:0007005"/>
    <property type="project" value="MTBBASE"/>
</dbReference>
<dbReference type="GO" id="GO:0016491">
    <property type="term" value="F:oxidoreductase activity"/>
    <property type="evidence" value="ECO:0007669"/>
    <property type="project" value="UniProtKB-KW"/>
</dbReference>
<dbReference type="Gene3D" id="3.90.660.10">
    <property type="match status" value="1"/>
</dbReference>
<dbReference type="Gene3D" id="3.50.50.60">
    <property type="entry name" value="FAD/NAD(P)-binding domain"/>
    <property type="match status" value="1"/>
</dbReference>
<dbReference type="Gene3D" id="1.10.405.10">
    <property type="entry name" value="Guanine Nucleotide Dissociation Inhibitor, domain 1"/>
    <property type="match status" value="1"/>
</dbReference>
<dbReference type="InterPro" id="IPR002937">
    <property type="entry name" value="Amino_oxidase"/>
</dbReference>
<dbReference type="InterPro" id="IPR036188">
    <property type="entry name" value="FAD/NAD-bd_sf"/>
</dbReference>
<dbReference type="InterPro" id="IPR001613">
    <property type="entry name" value="Flavin_amine_oxidase"/>
</dbReference>
<dbReference type="InterPro" id="IPR050703">
    <property type="entry name" value="Flavin_MAO"/>
</dbReference>
<dbReference type="PANTHER" id="PTHR43563">
    <property type="entry name" value="AMINE OXIDASE"/>
    <property type="match status" value="1"/>
</dbReference>
<dbReference type="PANTHER" id="PTHR43563:SF1">
    <property type="entry name" value="AMINE OXIDASE [FLAVIN-CONTAINING] B"/>
    <property type="match status" value="1"/>
</dbReference>
<dbReference type="Pfam" id="PF01593">
    <property type="entry name" value="Amino_oxidase"/>
    <property type="match status" value="1"/>
</dbReference>
<dbReference type="PRINTS" id="PR00757">
    <property type="entry name" value="AMINEOXDASEF"/>
</dbReference>
<dbReference type="SUPFAM" id="SSF54373">
    <property type="entry name" value="FAD-linked reductases, C-terminal domain"/>
    <property type="match status" value="1"/>
</dbReference>
<dbReference type="SUPFAM" id="SSF51905">
    <property type="entry name" value="FAD/NAD(P)-binding domain"/>
    <property type="match status" value="1"/>
</dbReference>
<reference key="1">
    <citation type="journal article" date="1998" name="Nature">
        <title>Deciphering the biology of Mycobacterium tuberculosis from the complete genome sequence.</title>
        <authorList>
            <person name="Cole S.T."/>
            <person name="Brosch R."/>
            <person name="Parkhill J."/>
            <person name="Garnier T."/>
            <person name="Churcher C.M."/>
            <person name="Harris D.E."/>
            <person name="Gordon S.V."/>
            <person name="Eiglmeier K."/>
            <person name="Gas S."/>
            <person name="Barry C.E. III"/>
            <person name="Tekaia F."/>
            <person name="Badcock K."/>
            <person name="Basham D."/>
            <person name="Brown D."/>
            <person name="Chillingworth T."/>
            <person name="Connor R."/>
            <person name="Davies R.M."/>
            <person name="Devlin K."/>
            <person name="Feltwell T."/>
            <person name="Gentles S."/>
            <person name="Hamlin N."/>
            <person name="Holroyd S."/>
            <person name="Hornsby T."/>
            <person name="Jagels K."/>
            <person name="Krogh A."/>
            <person name="McLean J."/>
            <person name="Moule S."/>
            <person name="Murphy L.D."/>
            <person name="Oliver S."/>
            <person name="Osborne J."/>
            <person name="Quail M.A."/>
            <person name="Rajandream M.A."/>
            <person name="Rogers J."/>
            <person name="Rutter S."/>
            <person name="Seeger K."/>
            <person name="Skelton S."/>
            <person name="Squares S."/>
            <person name="Squares R."/>
            <person name="Sulston J.E."/>
            <person name="Taylor K."/>
            <person name="Whitehead S."/>
            <person name="Barrell B.G."/>
        </authorList>
    </citation>
    <scope>NUCLEOTIDE SEQUENCE [LARGE SCALE GENOMIC DNA]</scope>
    <source>
        <strain>ATCC 25618 / H37Rv</strain>
    </source>
</reference>
<reference key="2">
    <citation type="journal article" date="2011" name="Mol. Cell. Proteomics">
        <title>Proteogenomic analysis of Mycobacterium tuberculosis by high resolution mass spectrometry.</title>
        <authorList>
            <person name="Kelkar D.S."/>
            <person name="Kumar D."/>
            <person name="Kumar P."/>
            <person name="Balakrishnan L."/>
            <person name="Muthusamy B."/>
            <person name="Yadav A.K."/>
            <person name="Shrivastava P."/>
            <person name="Marimuthu A."/>
            <person name="Anand S."/>
            <person name="Sundaram H."/>
            <person name="Kingsbury R."/>
            <person name="Harsha H.C."/>
            <person name="Nair B."/>
            <person name="Prasad T.S."/>
            <person name="Chauhan D.S."/>
            <person name="Katoch K."/>
            <person name="Katoch V.M."/>
            <person name="Kumar P."/>
            <person name="Chaerkady R."/>
            <person name="Ramachandran S."/>
            <person name="Dash D."/>
            <person name="Pandey A."/>
        </authorList>
    </citation>
    <scope>IDENTIFICATION BY MASS SPECTROMETRY [LARGE SCALE ANALYSIS]</scope>
    <source>
        <strain>ATCC 25618 / H37Rv</strain>
    </source>
</reference>
<feature type="chain" id="PRO_0000099867" description="Putative flavin-containing monoamine oxidase AofH">
    <location>
        <begin position="1"/>
        <end position="454"/>
    </location>
</feature>